<dbReference type="EC" id="6.3.1.20" evidence="1"/>
<dbReference type="EMBL" id="AE017220">
    <property type="protein sequence ID" value="AAX68326.1"/>
    <property type="molecule type" value="Genomic_DNA"/>
</dbReference>
<dbReference type="RefSeq" id="WP_001541497.1">
    <property type="nucleotide sequence ID" value="NC_006905.1"/>
</dbReference>
<dbReference type="SMR" id="Q57G36"/>
<dbReference type="KEGG" id="sec:SCH_4420"/>
<dbReference type="HOGENOM" id="CLU_022986_0_1_6"/>
<dbReference type="UniPathway" id="UPA00537">
    <property type="reaction ID" value="UER00594"/>
</dbReference>
<dbReference type="UniPathway" id="UPA00537">
    <property type="reaction ID" value="UER00595"/>
</dbReference>
<dbReference type="Proteomes" id="UP000000538">
    <property type="component" value="Chromosome"/>
</dbReference>
<dbReference type="GO" id="GO:0005829">
    <property type="term" value="C:cytosol"/>
    <property type="evidence" value="ECO:0007669"/>
    <property type="project" value="TreeGrafter"/>
</dbReference>
<dbReference type="GO" id="GO:0005524">
    <property type="term" value="F:ATP binding"/>
    <property type="evidence" value="ECO:0007669"/>
    <property type="project" value="UniProtKB-KW"/>
</dbReference>
<dbReference type="GO" id="GO:0016979">
    <property type="term" value="F:lipoate-protein ligase activity"/>
    <property type="evidence" value="ECO:0007669"/>
    <property type="project" value="UniProtKB-UniRule"/>
</dbReference>
<dbReference type="GO" id="GO:0017118">
    <property type="term" value="F:lipoyltransferase activity"/>
    <property type="evidence" value="ECO:0007669"/>
    <property type="project" value="TreeGrafter"/>
</dbReference>
<dbReference type="GO" id="GO:0036211">
    <property type="term" value="P:protein modification process"/>
    <property type="evidence" value="ECO:0007669"/>
    <property type="project" value="InterPro"/>
</dbReference>
<dbReference type="CDD" id="cd16443">
    <property type="entry name" value="LplA"/>
    <property type="match status" value="1"/>
</dbReference>
<dbReference type="FunFam" id="3.30.930.10:FF:000024">
    <property type="entry name" value="Lipoate-protein ligase A"/>
    <property type="match status" value="1"/>
</dbReference>
<dbReference type="Gene3D" id="3.30.930.10">
    <property type="entry name" value="Bira Bifunctional Protein, Domain 2"/>
    <property type="match status" value="1"/>
</dbReference>
<dbReference type="Gene3D" id="3.30.390.50">
    <property type="entry name" value="CO dehydrogenase flavoprotein, C-terminal domain"/>
    <property type="match status" value="1"/>
</dbReference>
<dbReference type="HAMAP" id="MF_01602">
    <property type="entry name" value="LplA"/>
    <property type="match status" value="1"/>
</dbReference>
<dbReference type="InterPro" id="IPR045864">
    <property type="entry name" value="aa-tRNA-synth_II/BPL/LPL"/>
</dbReference>
<dbReference type="InterPro" id="IPR004143">
    <property type="entry name" value="BPL_LPL_catalytic"/>
</dbReference>
<dbReference type="InterPro" id="IPR023741">
    <property type="entry name" value="Lipoate_ligase_A"/>
</dbReference>
<dbReference type="InterPro" id="IPR019491">
    <property type="entry name" value="Lipoate_protein_ligase_C"/>
</dbReference>
<dbReference type="InterPro" id="IPR004562">
    <property type="entry name" value="LipoylTrfase_LipoateP_Ligase"/>
</dbReference>
<dbReference type="NCBIfam" id="TIGR00545">
    <property type="entry name" value="lipoyltrans"/>
    <property type="match status" value="1"/>
</dbReference>
<dbReference type="PANTHER" id="PTHR12561">
    <property type="entry name" value="LIPOATE-PROTEIN LIGASE"/>
    <property type="match status" value="1"/>
</dbReference>
<dbReference type="PANTHER" id="PTHR12561:SF3">
    <property type="entry name" value="LIPOYLTRANSFERASE 1, MITOCHONDRIAL"/>
    <property type="match status" value="1"/>
</dbReference>
<dbReference type="Pfam" id="PF10437">
    <property type="entry name" value="Lip_prot_lig_C"/>
    <property type="match status" value="1"/>
</dbReference>
<dbReference type="Pfam" id="PF21948">
    <property type="entry name" value="LplA-B_cat"/>
    <property type="match status" value="1"/>
</dbReference>
<dbReference type="SUPFAM" id="SSF55681">
    <property type="entry name" value="Class II aaRS and biotin synthetases"/>
    <property type="match status" value="1"/>
</dbReference>
<dbReference type="SUPFAM" id="SSF82649">
    <property type="entry name" value="SufE/NifU"/>
    <property type="match status" value="1"/>
</dbReference>
<dbReference type="PROSITE" id="PS51733">
    <property type="entry name" value="BPL_LPL_CATALYTIC"/>
    <property type="match status" value="1"/>
</dbReference>
<reference key="1">
    <citation type="journal article" date="2005" name="Nucleic Acids Res.">
        <title>The genome sequence of Salmonella enterica serovar Choleraesuis, a highly invasive and resistant zoonotic pathogen.</title>
        <authorList>
            <person name="Chiu C.-H."/>
            <person name="Tang P."/>
            <person name="Chu C."/>
            <person name="Hu S."/>
            <person name="Bao Q."/>
            <person name="Yu J."/>
            <person name="Chou Y.-Y."/>
            <person name="Wang H.-S."/>
            <person name="Lee Y.-S."/>
        </authorList>
    </citation>
    <scope>NUCLEOTIDE SEQUENCE [LARGE SCALE GENOMIC DNA]</scope>
    <source>
        <strain>SC-B67</strain>
    </source>
</reference>
<accession>Q57G36</accession>
<evidence type="ECO:0000255" key="1">
    <source>
        <dbReference type="HAMAP-Rule" id="MF_01602"/>
    </source>
</evidence>
<evidence type="ECO:0000255" key="2">
    <source>
        <dbReference type="PROSITE-ProRule" id="PRU01067"/>
    </source>
</evidence>
<proteinExistence type="inferred from homology"/>
<feature type="chain" id="PRO_1000069385" description="Lipoate-protein ligase A">
    <location>
        <begin position="1"/>
        <end position="338"/>
    </location>
</feature>
<feature type="domain" description="BPL/LPL catalytic" evidence="2">
    <location>
        <begin position="29"/>
        <end position="216"/>
    </location>
</feature>
<feature type="binding site" evidence="1">
    <location>
        <position position="71"/>
    </location>
    <ligand>
        <name>ATP</name>
        <dbReference type="ChEBI" id="CHEBI:30616"/>
    </ligand>
</feature>
<feature type="binding site" evidence="1">
    <location>
        <begin position="76"/>
        <end position="79"/>
    </location>
    <ligand>
        <name>ATP</name>
        <dbReference type="ChEBI" id="CHEBI:30616"/>
    </ligand>
</feature>
<feature type="binding site" evidence="1">
    <location>
        <position position="134"/>
    </location>
    <ligand>
        <name>(R)-lipoate</name>
        <dbReference type="ChEBI" id="CHEBI:83088"/>
    </ligand>
</feature>
<feature type="binding site" evidence="1">
    <location>
        <position position="134"/>
    </location>
    <ligand>
        <name>ATP</name>
        <dbReference type="ChEBI" id="CHEBI:30616"/>
    </ligand>
</feature>
<keyword id="KW-0067">ATP-binding</keyword>
<keyword id="KW-0963">Cytoplasm</keyword>
<keyword id="KW-0436">Ligase</keyword>
<keyword id="KW-0547">Nucleotide-binding</keyword>
<sequence>MTTLRLLISDSYDPWFNLAVEECIFRQMPATQRVLFLWRNADTVVIGRAQNPWKECNTRRMEEDNVRLARRSSGGGAVFHDLGNTCFTFMAGKPEYDKTISTHIVLAALNSLGVMADASGRNDLVVKTPDGDRKVSGSAYRETKDRGFHHGTLLLNADLSRLANYLNPDKKKLAAKGITSVRSRVANLTELLPGITHEQVCQAVTEAFFAHYGERVDAEVISPDKTPDLPNFAETFARQSSWEWNFGQAPAFSHLLDEHFTWGGVELHFDVEKGVITRAQVFTDSLNPAPLEALAGRLQGCQYRADVLEQACKSLIAEFPAQKGELRELAAWMAQAVR</sequence>
<organism>
    <name type="scientific">Salmonella choleraesuis (strain SC-B67)</name>
    <dbReference type="NCBI Taxonomy" id="321314"/>
    <lineage>
        <taxon>Bacteria</taxon>
        <taxon>Pseudomonadati</taxon>
        <taxon>Pseudomonadota</taxon>
        <taxon>Gammaproteobacteria</taxon>
        <taxon>Enterobacterales</taxon>
        <taxon>Enterobacteriaceae</taxon>
        <taxon>Salmonella</taxon>
    </lineage>
</organism>
<comment type="function">
    <text evidence="1">Catalyzes both the ATP-dependent activation of exogenously supplied lipoate to lipoyl-AMP and the transfer of the activated lipoyl onto the lipoyl domains of lipoate-dependent enzymes.</text>
</comment>
<comment type="catalytic activity">
    <reaction evidence="1">
        <text>L-lysyl-[lipoyl-carrier protein] + (R)-lipoate + ATP = N(6)-[(R)-lipoyl]-L-lysyl-[lipoyl-carrier protein] + AMP + diphosphate + H(+)</text>
        <dbReference type="Rhea" id="RHEA:49288"/>
        <dbReference type="Rhea" id="RHEA-COMP:10500"/>
        <dbReference type="Rhea" id="RHEA-COMP:10502"/>
        <dbReference type="ChEBI" id="CHEBI:15378"/>
        <dbReference type="ChEBI" id="CHEBI:29969"/>
        <dbReference type="ChEBI" id="CHEBI:30616"/>
        <dbReference type="ChEBI" id="CHEBI:33019"/>
        <dbReference type="ChEBI" id="CHEBI:83088"/>
        <dbReference type="ChEBI" id="CHEBI:83099"/>
        <dbReference type="ChEBI" id="CHEBI:456215"/>
        <dbReference type="EC" id="6.3.1.20"/>
    </reaction>
</comment>
<comment type="pathway">
    <text evidence="1">Protein modification; protein lipoylation via exogenous pathway; protein N(6)-(lipoyl)lysine from lipoate: step 1/2.</text>
</comment>
<comment type="pathway">
    <text evidence="1">Protein modification; protein lipoylation via exogenous pathway; protein N(6)-(lipoyl)lysine from lipoate: step 2/2.</text>
</comment>
<comment type="subunit">
    <text evidence="1">Monomer.</text>
</comment>
<comment type="subcellular location">
    <subcellularLocation>
        <location evidence="1">Cytoplasm</location>
    </subcellularLocation>
</comment>
<comment type="miscellaneous">
    <text evidence="1">In the transfer reaction, the free carboxyl group of lipoic acid is attached via an amide linkage to the epsilon-amino group of a specific lysine residue of lipoyl domains of lipoate-dependent enzymes.</text>
</comment>
<comment type="similarity">
    <text evidence="1">Belongs to the LplA family.</text>
</comment>
<name>LPLA_SALCH</name>
<protein>
    <recommendedName>
        <fullName evidence="1">Lipoate-protein ligase A</fullName>
        <ecNumber evidence="1">6.3.1.20</ecNumber>
    </recommendedName>
    <alternativeName>
        <fullName evidence="1">Lipoate--protein ligase</fullName>
    </alternativeName>
</protein>
<gene>
    <name evidence="1" type="primary">lplA</name>
    <name type="ordered locus">SCH_4420</name>
</gene>